<organism>
    <name type="scientific">Desulforudis audaxviator (strain MP104C)</name>
    <dbReference type="NCBI Taxonomy" id="477974"/>
    <lineage>
        <taxon>Bacteria</taxon>
        <taxon>Bacillati</taxon>
        <taxon>Bacillota</taxon>
        <taxon>Clostridia</taxon>
        <taxon>Thermoanaerobacterales</taxon>
        <taxon>Candidatus Desulforudaceae</taxon>
        <taxon>Candidatus Desulforudis</taxon>
    </lineage>
</organism>
<accession>B1I1D1</accession>
<proteinExistence type="inferred from homology"/>
<sequence length="459" mass="51116">MSRLWGGRFRKETDPLVEEFHSSLSFDRRLYAYDIRGSIAHARMLGRVGIISAEEARTLEAGLYAVLDDFNAGRVAFSPEDEDIHSLVERLLIARVGEVGKKLHTARSRNDQVALDVRMYLKDEIDAVRELLAELQHTLLDLAERHIETLLPGYTHLQRAQPVTLAHHLLAYVEMFHRDAERLADCRRRTDVLPLGAGALAGTVFPIDREYTAAELGFAALAENSLDAVSDRDFAVEFCAAAALIMVHLSRFCEELVLWSTAEFGFAEMDDAFATGSSMMPQKKNPDMAELIRGKSGRVFGDLQALLAMLKGLPLAYNKDMQEDKEALFDAVDTVKKCLMVFTAMIGTVSFREQAMDRAVRGGFTNATDLADYLAGRGVPFREAHEIVGEIVLYALETGKTLEELTLEEYRRFSAAVGEDVYAAIRVEHCLAARKVHGGPAPETVRAAIARARKRLERV</sequence>
<evidence type="ECO:0000255" key="1">
    <source>
        <dbReference type="HAMAP-Rule" id="MF_00006"/>
    </source>
</evidence>
<feature type="chain" id="PRO_1000089078" description="Argininosuccinate lyase">
    <location>
        <begin position="1"/>
        <end position="459"/>
    </location>
</feature>
<gene>
    <name evidence="1" type="primary">argH</name>
    <name type="ordered locus">Daud_0345</name>
</gene>
<comment type="catalytic activity">
    <reaction evidence="1">
        <text>2-(N(omega)-L-arginino)succinate = fumarate + L-arginine</text>
        <dbReference type="Rhea" id="RHEA:24020"/>
        <dbReference type="ChEBI" id="CHEBI:29806"/>
        <dbReference type="ChEBI" id="CHEBI:32682"/>
        <dbReference type="ChEBI" id="CHEBI:57472"/>
        <dbReference type="EC" id="4.3.2.1"/>
    </reaction>
</comment>
<comment type="pathway">
    <text evidence="1">Amino-acid biosynthesis; L-arginine biosynthesis; L-arginine from L-ornithine and carbamoyl phosphate: step 3/3.</text>
</comment>
<comment type="subcellular location">
    <subcellularLocation>
        <location evidence="1">Cytoplasm</location>
    </subcellularLocation>
</comment>
<comment type="similarity">
    <text evidence="1">Belongs to the lyase 1 family. Argininosuccinate lyase subfamily.</text>
</comment>
<name>ARLY_DESAP</name>
<keyword id="KW-0028">Amino-acid biosynthesis</keyword>
<keyword id="KW-0055">Arginine biosynthesis</keyword>
<keyword id="KW-0963">Cytoplasm</keyword>
<keyword id="KW-0456">Lyase</keyword>
<keyword id="KW-1185">Reference proteome</keyword>
<reference key="1">
    <citation type="submission" date="2007-10" db="EMBL/GenBank/DDBJ databases">
        <title>Complete sequence of chromosome of Desulforudis audaxviator MP104C.</title>
        <authorList>
            <person name="Copeland A."/>
            <person name="Lucas S."/>
            <person name="Lapidus A."/>
            <person name="Barry K."/>
            <person name="Glavina del Rio T."/>
            <person name="Dalin E."/>
            <person name="Tice H."/>
            <person name="Bruce D."/>
            <person name="Pitluck S."/>
            <person name="Lowry S.R."/>
            <person name="Larimer F."/>
            <person name="Land M.L."/>
            <person name="Hauser L."/>
            <person name="Kyrpides N."/>
            <person name="Ivanova N.N."/>
            <person name="Richardson P."/>
        </authorList>
    </citation>
    <scope>NUCLEOTIDE SEQUENCE [LARGE SCALE GENOMIC DNA]</scope>
    <source>
        <strain>MP104C</strain>
    </source>
</reference>
<protein>
    <recommendedName>
        <fullName evidence="1">Argininosuccinate lyase</fullName>
        <shortName evidence="1">ASAL</shortName>
        <ecNumber evidence="1">4.3.2.1</ecNumber>
    </recommendedName>
    <alternativeName>
        <fullName evidence="1">Arginosuccinase</fullName>
    </alternativeName>
</protein>
<dbReference type="EC" id="4.3.2.1" evidence="1"/>
<dbReference type="EMBL" id="CP000860">
    <property type="protein sequence ID" value="ACA58903.1"/>
    <property type="molecule type" value="Genomic_DNA"/>
</dbReference>
<dbReference type="RefSeq" id="WP_012301495.1">
    <property type="nucleotide sequence ID" value="NC_010424.1"/>
</dbReference>
<dbReference type="SMR" id="B1I1D1"/>
<dbReference type="STRING" id="477974.Daud_0345"/>
<dbReference type="KEGG" id="dau:Daud_0345"/>
<dbReference type="eggNOG" id="COG0165">
    <property type="taxonomic scope" value="Bacteria"/>
</dbReference>
<dbReference type="HOGENOM" id="CLU_027272_2_3_9"/>
<dbReference type="OrthoDB" id="9769623at2"/>
<dbReference type="UniPathway" id="UPA00068">
    <property type="reaction ID" value="UER00114"/>
</dbReference>
<dbReference type="Proteomes" id="UP000008544">
    <property type="component" value="Chromosome"/>
</dbReference>
<dbReference type="GO" id="GO:0005829">
    <property type="term" value="C:cytosol"/>
    <property type="evidence" value="ECO:0007669"/>
    <property type="project" value="TreeGrafter"/>
</dbReference>
<dbReference type="GO" id="GO:0004056">
    <property type="term" value="F:argininosuccinate lyase activity"/>
    <property type="evidence" value="ECO:0007669"/>
    <property type="project" value="UniProtKB-UniRule"/>
</dbReference>
<dbReference type="GO" id="GO:0042450">
    <property type="term" value="P:arginine biosynthetic process via ornithine"/>
    <property type="evidence" value="ECO:0007669"/>
    <property type="project" value="InterPro"/>
</dbReference>
<dbReference type="GO" id="GO:0006526">
    <property type="term" value="P:L-arginine biosynthetic process"/>
    <property type="evidence" value="ECO:0007669"/>
    <property type="project" value="UniProtKB-UniRule"/>
</dbReference>
<dbReference type="CDD" id="cd01359">
    <property type="entry name" value="Argininosuccinate_lyase"/>
    <property type="match status" value="1"/>
</dbReference>
<dbReference type="FunFam" id="1.10.40.30:FF:000001">
    <property type="entry name" value="Argininosuccinate lyase"/>
    <property type="match status" value="1"/>
</dbReference>
<dbReference type="FunFam" id="1.20.200.10:FF:000015">
    <property type="entry name" value="argininosuccinate lyase isoform X2"/>
    <property type="match status" value="1"/>
</dbReference>
<dbReference type="Gene3D" id="1.10.40.30">
    <property type="entry name" value="Fumarase/aspartase (C-terminal domain)"/>
    <property type="match status" value="1"/>
</dbReference>
<dbReference type="Gene3D" id="1.20.200.10">
    <property type="entry name" value="Fumarase/aspartase (Central domain)"/>
    <property type="match status" value="1"/>
</dbReference>
<dbReference type="Gene3D" id="1.10.275.10">
    <property type="entry name" value="Fumarase/aspartase (N-terminal domain)"/>
    <property type="match status" value="1"/>
</dbReference>
<dbReference type="HAMAP" id="MF_00006">
    <property type="entry name" value="Arg_succ_lyase"/>
    <property type="match status" value="1"/>
</dbReference>
<dbReference type="InterPro" id="IPR029419">
    <property type="entry name" value="Arg_succ_lyase_C"/>
</dbReference>
<dbReference type="InterPro" id="IPR009049">
    <property type="entry name" value="Argininosuccinate_lyase"/>
</dbReference>
<dbReference type="InterPro" id="IPR024083">
    <property type="entry name" value="Fumarase/histidase_N"/>
</dbReference>
<dbReference type="InterPro" id="IPR020557">
    <property type="entry name" value="Fumarate_lyase_CS"/>
</dbReference>
<dbReference type="InterPro" id="IPR000362">
    <property type="entry name" value="Fumarate_lyase_fam"/>
</dbReference>
<dbReference type="InterPro" id="IPR022761">
    <property type="entry name" value="Fumarate_lyase_N"/>
</dbReference>
<dbReference type="InterPro" id="IPR008948">
    <property type="entry name" value="L-Aspartase-like"/>
</dbReference>
<dbReference type="NCBIfam" id="TIGR00838">
    <property type="entry name" value="argH"/>
    <property type="match status" value="1"/>
</dbReference>
<dbReference type="PANTHER" id="PTHR43814">
    <property type="entry name" value="ARGININOSUCCINATE LYASE"/>
    <property type="match status" value="1"/>
</dbReference>
<dbReference type="PANTHER" id="PTHR43814:SF1">
    <property type="entry name" value="ARGININOSUCCINATE LYASE"/>
    <property type="match status" value="1"/>
</dbReference>
<dbReference type="Pfam" id="PF14698">
    <property type="entry name" value="ASL_C2"/>
    <property type="match status" value="1"/>
</dbReference>
<dbReference type="Pfam" id="PF00206">
    <property type="entry name" value="Lyase_1"/>
    <property type="match status" value="1"/>
</dbReference>
<dbReference type="PRINTS" id="PR00145">
    <property type="entry name" value="ARGSUCLYASE"/>
</dbReference>
<dbReference type="PRINTS" id="PR00149">
    <property type="entry name" value="FUMRATELYASE"/>
</dbReference>
<dbReference type="SUPFAM" id="SSF48557">
    <property type="entry name" value="L-aspartase-like"/>
    <property type="match status" value="1"/>
</dbReference>
<dbReference type="PROSITE" id="PS00163">
    <property type="entry name" value="FUMARATE_LYASES"/>
    <property type="match status" value="1"/>
</dbReference>